<gene>
    <name evidence="1" type="primary">prmA</name>
    <name type="ordered locus">ABAYE1371</name>
</gene>
<feature type="chain" id="PRO_1000192566" description="Ribosomal protein L11 methyltransferase">
    <location>
        <begin position="1"/>
        <end position="301"/>
    </location>
</feature>
<feature type="binding site" evidence="1">
    <location>
        <position position="146"/>
    </location>
    <ligand>
        <name>S-adenosyl-L-methionine</name>
        <dbReference type="ChEBI" id="CHEBI:59789"/>
    </ligand>
</feature>
<feature type="binding site" evidence="1">
    <location>
        <position position="167"/>
    </location>
    <ligand>
        <name>S-adenosyl-L-methionine</name>
        <dbReference type="ChEBI" id="CHEBI:59789"/>
    </ligand>
</feature>
<feature type="binding site" evidence="1">
    <location>
        <position position="189"/>
    </location>
    <ligand>
        <name>S-adenosyl-L-methionine</name>
        <dbReference type="ChEBI" id="CHEBI:59789"/>
    </ligand>
</feature>
<feature type="binding site" evidence="1">
    <location>
        <position position="234"/>
    </location>
    <ligand>
        <name>S-adenosyl-L-methionine</name>
        <dbReference type="ChEBI" id="CHEBI:59789"/>
    </ligand>
</feature>
<keyword id="KW-0963">Cytoplasm</keyword>
<keyword id="KW-0489">Methyltransferase</keyword>
<keyword id="KW-0949">S-adenosyl-L-methionine</keyword>
<keyword id="KW-0808">Transferase</keyword>
<reference key="1">
    <citation type="journal article" date="2008" name="PLoS ONE">
        <title>Comparative analysis of Acinetobacters: three genomes for three lifestyles.</title>
        <authorList>
            <person name="Vallenet D."/>
            <person name="Nordmann P."/>
            <person name="Barbe V."/>
            <person name="Poirel L."/>
            <person name="Mangenot S."/>
            <person name="Bataille E."/>
            <person name="Dossat C."/>
            <person name="Gas S."/>
            <person name="Kreimeyer A."/>
            <person name="Lenoble P."/>
            <person name="Oztas S."/>
            <person name="Poulain J."/>
            <person name="Segurens B."/>
            <person name="Robert C."/>
            <person name="Abergel C."/>
            <person name="Claverie J.-M."/>
            <person name="Raoult D."/>
            <person name="Medigue C."/>
            <person name="Weissenbach J."/>
            <person name="Cruveiller S."/>
        </authorList>
    </citation>
    <scope>NUCLEOTIDE SEQUENCE [LARGE SCALE GENOMIC DNA]</scope>
    <source>
        <strain>AYE</strain>
    </source>
</reference>
<comment type="function">
    <text evidence="1">Methylates ribosomal protein L11.</text>
</comment>
<comment type="catalytic activity">
    <reaction evidence="1">
        <text>L-lysyl-[protein] + 3 S-adenosyl-L-methionine = N(6),N(6),N(6)-trimethyl-L-lysyl-[protein] + 3 S-adenosyl-L-homocysteine + 3 H(+)</text>
        <dbReference type="Rhea" id="RHEA:54192"/>
        <dbReference type="Rhea" id="RHEA-COMP:9752"/>
        <dbReference type="Rhea" id="RHEA-COMP:13826"/>
        <dbReference type="ChEBI" id="CHEBI:15378"/>
        <dbReference type="ChEBI" id="CHEBI:29969"/>
        <dbReference type="ChEBI" id="CHEBI:57856"/>
        <dbReference type="ChEBI" id="CHEBI:59789"/>
        <dbReference type="ChEBI" id="CHEBI:61961"/>
    </reaction>
</comment>
<comment type="subcellular location">
    <subcellularLocation>
        <location evidence="1">Cytoplasm</location>
    </subcellularLocation>
</comment>
<comment type="similarity">
    <text evidence="1">Belongs to the methyltransferase superfamily. PrmA family.</text>
</comment>
<sequence>MKWLQIHITVDQEQVEFTETLLMSLGAVSVTLDDAEDQALLEPLPGETPLWNKVIVTGIYQQDEQDPIDVDTLEAFLKAQLPDVPMRHEELEDQVWERAWMDYYEPIQIGEKFWIVPEWLEPPEADATNIKLDPGLAFGTGNHASTFLCLQWLGKTDVKDKIVIDYGCGSGILGVAALLLGAKKVYATDIDPQAVLATKQNAELNGVLDRLYVGLPEEFDQEFKPQQADVLVANILAGPLMALAPEFAKLLKSDGDFALAGVIEEQVADVSGVYSEFFDILDVEKREENWCRISGKRKTTN</sequence>
<proteinExistence type="inferred from homology"/>
<name>PRMA_ACIBY</name>
<accession>B0V7H8</accession>
<dbReference type="EC" id="2.1.1.-" evidence="1"/>
<dbReference type="EMBL" id="CU459141">
    <property type="protein sequence ID" value="CAM86285.1"/>
    <property type="molecule type" value="Genomic_DNA"/>
</dbReference>
<dbReference type="RefSeq" id="WP_000871703.1">
    <property type="nucleotide sequence ID" value="NZ_JBDGFB010000016.1"/>
</dbReference>
<dbReference type="SMR" id="B0V7H8"/>
<dbReference type="EnsemblBacteria" id="CAM86285">
    <property type="protein sequence ID" value="CAM86285"/>
    <property type="gene ID" value="ABAYE1371"/>
</dbReference>
<dbReference type="GeneID" id="92894424"/>
<dbReference type="KEGG" id="aby:ABAYE1371"/>
<dbReference type="HOGENOM" id="CLU_049382_4_1_6"/>
<dbReference type="GO" id="GO:0005829">
    <property type="term" value="C:cytosol"/>
    <property type="evidence" value="ECO:0007669"/>
    <property type="project" value="TreeGrafter"/>
</dbReference>
<dbReference type="GO" id="GO:0016279">
    <property type="term" value="F:protein-lysine N-methyltransferase activity"/>
    <property type="evidence" value="ECO:0007669"/>
    <property type="project" value="TreeGrafter"/>
</dbReference>
<dbReference type="GO" id="GO:0032259">
    <property type="term" value="P:methylation"/>
    <property type="evidence" value="ECO:0007669"/>
    <property type="project" value="UniProtKB-KW"/>
</dbReference>
<dbReference type="CDD" id="cd02440">
    <property type="entry name" value="AdoMet_MTases"/>
    <property type="match status" value="1"/>
</dbReference>
<dbReference type="Gene3D" id="3.40.50.150">
    <property type="entry name" value="Vaccinia Virus protein VP39"/>
    <property type="match status" value="1"/>
</dbReference>
<dbReference type="HAMAP" id="MF_00735">
    <property type="entry name" value="Methyltr_PrmA"/>
    <property type="match status" value="1"/>
</dbReference>
<dbReference type="InterPro" id="IPR050078">
    <property type="entry name" value="Ribosomal_L11_MeTrfase_PrmA"/>
</dbReference>
<dbReference type="InterPro" id="IPR004498">
    <property type="entry name" value="Ribosomal_PrmA_MeTrfase"/>
</dbReference>
<dbReference type="InterPro" id="IPR029063">
    <property type="entry name" value="SAM-dependent_MTases_sf"/>
</dbReference>
<dbReference type="NCBIfam" id="TIGR00406">
    <property type="entry name" value="prmA"/>
    <property type="match status" value="1"/>
</dbReference>
<dbReference type="PANTHER" id="PTHR43648">
    <property type="entry name" value="ELECTRON TRANSFER FLAVOPROTEIN BETA SUBUNIT LYSINE METHYLTRANSFERASE"/>
    <property type="match status" value="1"/>
</dbReference>
<dbReference type="PANTHER" id="PTHR43648:SF1">
    <property type="entry name" value="ELECTRON TRANSFER FLAVOPROTEIN BETA SUBUNIT LYSINE METHYLTRANSFERASE"/>
    <property type="match status" value="1"/>
</dbReference>
<dbReference type="Pfam" id="PF06325">
    <property type="entry name" value="PrmA"/>
    <property type="match status" value="1"/>
</dbReference>
<dbReference type="PIRSF" id="PIRSF000401">
    <property type="entry name" value="RPL11_MTase"/>
    <property type="match status" value="1"/>
</dbReference>
<dbReference type="SUPFAM" id="SSF53335">
    <property type="entry name" value="S-adenosyl-L-methionine-dependent methyltransferases"/>
    <property type="match status" value="1"/>
</dbReference>
<evidence type="ECO:0000255" key="1">
    <source>
        <dbReference type="HAMAP-Rule" id="MF_00735"/>
    </source>
</evidence>
<protein>
    <recommendedName>
        <fullName evidence="1">Ribosomal protein L11 methyltransferase</fullName>
        <shortName evidence="1">L11 Mtase</shortName>
        <ecNumber evidence="1">2.1.1.-</ecNumber>
    </recommendedName>
</protein>
<organism>
    <name type="scientific">Acinetobacter baumannii (strain AYE)</name>
    <dbReference type="NCBI Taxonomy" id="509173"/>
    <lineage>
        <taxon>Bacteria</taxon>
        <taxon>Pseudomonadati</taxon>
        <taxon>Pseudomonadota</taxon>
        <taxon>Gammaproteobacteria</taxon>
        <taxon>Moraxellales</taxon>
        <taxon>Moraxellaceae</taxon>
        <taxon>Acinetobacter</taxon>
        <taxon>Acinetobacter calcoaceticus/baumannii complex</taxon>
    </lineage>
</organism>